<reference key="1">
    <citation type="submission" date="2003-10" db="EMBL/GenBank/DDBJ databases">
        <title>The complete genome sequence of the alkaliphilic Bacillus clausii KSM-K16.</title>
        <authorList>
            <person name="Takaki Y."/>
            <person name="Kageyama Y."/>
            <person name="Shimamura S."/>
            <person name="Suzuki H."/>
            <person name="Nishi S."/>
            <person name="Hatada Y."/>
            <person name="Kawai S."/>
            <person name="Ito S."/>
            <person name="Horikoshi K."/>
        </authorList>
    </citation>
    <scope>NUCLEOTIDE SEQUENCE [LARGE SCALE GENOMIC DNA]</scope>
    <source>
        <strain>KSM-K16</strain>
    </source>
</reference>
<gene>
    <name evidence="1" type="primary">smpB</name>
    <name type="ordered locus">ABC3002</name>
</gene>
<sequence>MGETTEGKVVAQNKKARHDYFIEETFEAGIVLTGTEIKSIRAGKMNLKDSFARIKNGEAFLYNAHISEYEQGNRYNHEPTRPRKLLLHKKQINTLIGQTQQKGYSIVPLKVYIKNGFAKVLIGLAKGKKNYDKRETLRRKDAKREVERAIKERMRG</sequence>
<name>SSRP_SHOC1</name>
<proteinExistence type="inferred from homology"/>
<keyword id="KW-0963">Cytoplasm</keyword>
<keyword id="KW-1185">Reference proteome</keyword>
<keyword id="KW-0694">RNA-binding</keyword>
<accession>Q5WDM4</accession>
<protein>
    <recommendedName>
        <fullName evidence="1">SsrA-binding protein</fullName>
    </recommendedName>
    <alternativeName>
        <fullName evidence="1">Small protein B</fullName>
    </alternativeName>
</protein>
<dbReference type="EMBL" id="AP006627">
    <property type="protein sequence ID" value="BAD65536.1"/>
    <property type="status" value="ALT_INIT"/>
    <property type="molecule type" value="Genomic_DNA"/>
</dbReference>
<dbReference type="RefSeq" id="WP_035202732.1">
    <property type="nucleotide sequence ID" value="NC_006582.1"/>
</dbReference>
<dbReference type="SMR" id="Q5WDM4"/>
<dbReference type="STRING" id="66692.ABC3002"/>
<dbReference type="KEGG" id="bcl:ABC3002"/>
<dbReference type="eggNOG" id="COG0691">
    <property type="taxonomic scope" value="Bacteria"/>
</dbReference>
<dbReference type="HOGENOM" id="CLU_108953_0_0_9"/>
<dbReference type="OrthoDB" id="9805462at2"/>
<dbReference type="Proteomes" id="UP000001168">
    <property type="component" value="Chromosome"/>
</dbReference>
<dbReference type="GO" id="GO:0005829">
    <property type="term" value="C:cytosol"/>
    <property type="evidence" value="ECO:0007669"/>
    <property type="project" value="TreeGrafter"/>
</dbReference>
<dbReference type="GO" id="GO:0003723">
    <property type="term" value="F:RNA binding"/>
    <property type="evidence" value="ECO:0007669"/>
    <property type="project" value="UniProtKB-UniRule"/>
</dbReference>
<dbReference type="GO" id="GO:0070929">
    <property type="term" value="P:trans-translation"/>
    <property type="evidence" value="ECO:0007669"/>
    <property type="project" value="UniProtKB-UniRule"/>
</dbReference>
<dbReference type="CDD" id="cd09294">
    <property type="entry name" value="SmpB"/>
    <property type="match status" value="1"/>
</dbReference>
<dbReference type="Gene3D" id="2.40.280.10">
    <property type="match status" value="1"/>
</dbReference>
<dbReference type="HAMAP" id="MF_00023">
    <property type="entry name" value="SmpB"/>
    <property type="match status" value="1"/>
</dbReference>
<dbReference type="InterPro" id="IPR023620">
    <property type="entry name" value="SmpB"/>
</dbReference>
<dbReference type="InterPro" id="IPR000037">
    <property type="entry name" value="SsrA-bd_prot"/>
</dbReference>
<dbReference type="InterPro" id="IPR020081">
    <property type="entry name" value="SsrA-bd_prot_CS"/>
</dbReference>
<dbReference type="NCBIfam" id="NF003843">
    <property type="entry name" value="PRK05422.1"/>
    <property type="match status" value="1"/>
</dbReference>
<dbReference type="NCBIfam" id="TIGR00086">
    <property type="entry name" value="smpB"/>
    <property type="match status" value="1"/>
</dbReference>
<dbReference type="PANTHER" id="PTHR30308:SF2">
    <property type="entry name" value="SSRA-BINDING PROTEIN"/>
    <property type="match status" value="1"/>
</dbReference>
<dbReference type="PANTHER" id="PTHR30308">
    <property type="entry name" value="TMRNA-BINDING COMPONENT OF TRANS-TRANSLATION TAGGING COMPLEX"/>
    <property type="match status" value="1"/>
</dbReference>
<dbReference type="Pfam" id="PF01668">
    <property type="entry name" value="SmpB"/>
    <property type="match status" value="1"/>
</dbReference>
<dbReference type="SUPFAM" id="SSF74982">
    <property type="entry name" value="Small protein B (SmpB)"/>
    <property type="match status" value="1"/>
</dbReference>
<dbReference type="PROSITE" id="PS01317">
    <property type="entry name" value="SSRP"/>
    <property type="match status" value="1"/>
</dbReference>
<feature type="chain" id="PRO_0000102905" description="SsrA-binding protein">
    <location>
        <begin position="1"/>
        <end position="156"/>
    </location>
</feature>
<evidence type="ECO:0000255" key="1">
    <source>
        <dbReference type="HAMAP-Rule" id="MF_00023"/>
    </source>
</evidence>
<evidence type="ECO:0000305" key="2"/>
<organism>
    <name type="scientific">Shouchella clausii (strain KSM-K16)</name>
    <name type="common">Alkalihalobacillus clausii</name>
    <dbReference type="NCBI Taxonomy" id="66692"/>
    <lineage>
        <taxon>Bacteria</taxon>
        <taxon>Bacillati</taxon>
        <taxon>Bacillota</taxon>
        <taxon>Bacilli</taxon>
        <taxon>Bacillales</taxon>
        <taxon>Bacillaceae</taxon>
        <taxon>Shouchella</taxon>
    </lineage>
</organism>
<comment type="function">
    <text evidence="1">Required for rescue of stalled ribosomes mediated by trans-translation. Binds to transfer-messenger RNA (tmRNA), required for stable association of tmRNA with ribosomes. tmRNA and SmpB together mimic tRNA shape, replacing the anticodon stem-loop with SmpB. tmRNA is encoded by the ssrA gene; the 2 termini fold to resemble tRNA(Ala) and it encodes a 'tag peptide', a short internal open reading frame. During trans-translation Ala-aminoacylated tmRNA acts like a tRNA, entering the A-site of stalled ribosomes, displacing the stalled mRNA. The ribosome then switches to translate the ORF on the tmRNA; the nascent peptide is terminated with the 'tag peptide' encoded by the tmRNA and targeted for degradation. The ribosome is freed to recommence translation, which seems to be the essential function of trans-translation.</text>
</comment>
<comment type="subcellular location">
    <subcellularLocation>
        <location evidence="1">Cytoplasm</location>
    </subcellularLocation>
    <text evidence="1">The tmRNA-SmpB complex associates with stalled 70S ribosomes.</text>
</comment>
<comment type="similarity">
    <text evidence="1">Belongs to the SmpB family.</text>
</comment>
<comment type="sequence caution" evidence="2">
    <conflict type="erroneous initiation">
        <sequence resource="EMBL-CDS" id="BAD65536"/>
    </conflict>
    <text>Extended N-terminus.</text>
</comment>